<feature type="chain" id="PRO_0000125102" description="Large ribosomal subunit protein uL5">
    <location>
        <begin position="1"/>
        <end position="173"/>
    </location>
</feature>
<accession>Q8SSG9</accession>
<dbReference type="EMBL" id="AL590442">
    <property type="protein sequence ID" value="CAD25092.2"/>
    <property type="molecule type" value="Genomic_DNA"/>
</dbReference>
<dbReference type="RefSeq" id="NP_584588.1">
    <property type="nucleotide sequence ID" value="NM_001040777.1"/>
</dbReference>
<dbReference type="PDB" id="7QEP">
    <property type="method" value="EM"/>
    <property type="resolution" value="2.70 A"/>
    <property type="chains" value="M1=1-173"/>
</dbReference>
<dbReference type="PDBsum" id="7QEP"/>
<dbReference type="EMDB" id="EMD-13936"/>
<dbReference type="SMR" id="Q8SSG9"/>
<dbReference type="FunCoup" id="Q8SSG9">
    <property type="interactions" value="160"/>
</dbReference>
<dbReference type="STRING" id="284813.Q8SSG9"/>
<dbReference type="GeneID" id="858578"/>
<dbReference type="KEGG" id="ecu:ECU02_0610"/>
<dbReference type="VEuPathDB" id="MicrosporidiaDB:ECU02_0610"/>
<dbReference type="HOGENOM" id="CLU_061015_3_0_1"/>
<dbReference type="InParanoid" id="Q8SSG9"/>
<dbReference type="OrthoDB" id="1734943at2759"/>
<dbReference type="Proteomes" id="UP000000819">
    <property type="component" value="Chromosome II"/>
</dbReference>
<dbReference type="GO" id="GO:0005737">
    <property type="term" value="C:cytoplasm"/>
    <property type="evidence" value="ECO:0007669"/>
    <property type="project" value="UniProtKB-SubCell"/>
</dbReference>
<dbReference type="GO" id="GO:0005634">
    <property type="term" value="C:nucleus"/>
    <property type="evidence" value="ECO:0007669"/>
    <property type="project" value="UniProtKB-SubCell"/>
</dbReference>
<dbReference type="GO" id="GO:1990904">
    <property type="term" value="C:ribonucleoprotein complex"/>
    <property type="evidence" value="ECO:0007669"/>
    <property type="project" value="UniProtKB-KW"/>
</dbReference>
<dbReference type="GO" id="GO:0005840">
    <property type="term" value="C:ribosome"/>
    <property type="evidence" value="ECO:0007669"/>
    <property type="project" value="UniProtKB-KW"/>
</dbReference>
<dbReference type="GO" id="GO:0019843">
    <property type="term" value="F:rRNA binding"/>
    <property type="evidence" value="ECO:0007669"/>
    <property type="project" value="UniProtKB-KW"/>
</dbReference>
<dbReference type="GO" id="GO:0003735">
    <property type="term" value="F:structural constituent of ribosome"/>
    <property type="evidence" value="ECO:0007669"/>
    <property type="project" value="InterPro"/>
</dbReference>
<dbReference type="GO" id="GO:0006412">
    <property type="term" value="P:translation"/>
    <property type="evidence" value="ECO:0007669"/>
    <property type="project" value="InterPro"/>
</dbReference>
<dbReference type="FunFam" id="3.30.1440.10:FF:000002">
    <property type="entry name" value="60S ribosomal protein L11"/>
    <property type="match status" value="1"/>
</dbReference>
<dbReference type="Gene3D" id="3.30.1440.10">
    <property type="match status" value="1"/>
</dbReference>
<dbReference type="InterPro" id="IPR002132">
    <property type="entry name" value="Ribosomal_uL5"/>
</dbReference>
<dbReference type="InterPro" id="IPR031309">
    <property type="entry name" value="Ribosomal_uL5_C"/>
</dbReference>
<dbReference type="InterPro" id="IPR020929">
    <property type="entry name" value="Ribosomal_uL5_CS"/>
</dbReference>
<dbReference type="InterPro" id="IPR022803">
    <property type="entry name" value="Ribosomal_uL5_dom_sf"/>
</dbReference>
<dbReference type="InterPro" id="IPR031310">
    <property type="entry name" value="Ribosomal_uL5_N"/>
</dbReference>
<dbReference type="NCBIfam" id="NF003258">
    <property type="entry name" value="PRK04219.1"/>
    <property type="match status" value="1"/>
</dbReference>
<dbReference type="PANTHER" id="PTHR11994">
    <property type="entry name" value="60S RIBOSOMAL PROTEIN L11-RELATED"/>
    <property type="match status" value="1"/>
</dbReference>
<dbReference type="Pfam" id="PF00281">
    <property type="entry name" value="Ribosomal_L5"/>
    <property type="match status" value="1"/>
</dbReference>
<dbReference type="Pfam" id="PF00673">
    <property type="entry name" value="Ribosomal_L5_C"/>
    <property type="match status" value="1"/>
</dbReference>
<dbReference type="PIRSF" id="PIRSF002161">
    <property type="entry name" value="Ribosomal_L5"/>
    <property type="match status" value="1"/>
</dbReference>
<dbReference type="SUPFAM" id="SSF55282">
    <property type="entry name" value="RL5-like"/>
    <property type="match status" value="1"/>
</dbReference>
<dbReference type="PROSITE" id="PS00358">
    <property type="entry name" value="RIBOSOMAL_L5"/>
    <property type="match status" value="1"/>
</dbReference>
<organism>
    <name type="scientific">Encephalitozoon cuniculi (strain GB-M1)</name>
    <name type="common">Microsporidian parasite</name>
    <dbReference type="NCBI Taxonomy" id="284813"/>
    <lineage>
        <taxon>Eukaryota</taxon>
        <taxon>Fungi</taxon>
        <taxon>Fungi incertae sedis</taxon>
        <taxon>Microsporidia</taxon>
        <taxon>Unikaryonidae</taxon>
        <taxon>Encephalitozoon</taxon>
    </lineage>
</organism>
<keyword id="KW-0002">3D-structure</keyword>
<keyword id="KW-0963">Cytoplasm</keyword>
<keyword id="KW-0539">Nucleus</keyword>
<keyword id="KW-1185">Reference proteome</keyword>
<keyword id="KW-0687">Ribonucleoprotein</keyword>
<keyword id="KW-0689">Ribosomal protein</keyword>
<keyword id="KW-0694">RNA-binding</keyword>
<keyword id="KW-0699">rRNA-binding</keyword>
<name>RL11_ENCCU</name>
<evidence type="ECO:0000250" key="1">
    <source>
        <dbReference type="UniProtKB" id="P0C0W9"/>
    </source>
</evidence>
<evidence type="ECO:0000269" key="2">
    <source>
    </source>
</evidence>
<evidence type="ECO:0000305" key="3"/>
<gene>
    <name type="primary">RPL11</name>
    <name type="ordered locus">ECU02_0610</name>
</gene>
<reference key="1">
    <citation type="journal article" date="2001" name="Nature">
        <title>Genome sequence and gene compaction of the eukaryote parasite Encephalitozoon cuniculi.</title>
        <authorList>
            <person name="Katinka M.D."/>
            <person name="Duprat S."/>
            <person name="Cornillot E."/>
            <person name="Metenier G."/>
            <person name="Thomarat F."/>
            <person name="Prensier G."/>
            <person name="Barbe V."/>
            <person name="Peyretaillade E."/>
            <person name="Brottier P."/>
            <person name="Wincker P."/>
            <person name="Delbac F."/>
            <person name="El Alaoui H."/>
            <person name="Peyret P."/>
            <person name="Saurin W."/>
            <person name="Gouy M."/>
            <person name="Weissenbach J."/>
            <person name="Vivares C.P."/>
        </authorList>
    </citation>
    <scope>NUCLEOTIDE SEQUENCE [LARGE SCALE GENOMIC DNA]</scope>
    <source>
        <strain>GB-M1</strain>
    </source>
</reference>
<reference key="2">
    <citation type="journal article" date="2009" name="BMC Genomics">
        <title>Identification of transcriptional signals in Encephalitozoon cuniculi widespread among Microsporidia phylum: support for accurate structural genome annotation.</title>
        <authorList>
            <person name="Peyretaillade E."/>
            <person name="Goncalves O."/>
            <person name="Terrat S."/>
            <person name="Dugat-Bony E."/>
            <person name="Wincker P."/>
            <person name="Cornman R.S."/>
            <person name="Evans J.D."/>
            <person name="Delbac F."/>
            <person name="Peyret P."/>
        </authorList>
    </citation>
    <scope>GENOME REANNOTATION</scope>
    <source>
        <strain>GB-M1</strain>
    </source>
</reference>
<reference key="3">
    <citation type="journal article" date="2006" name="Proteomics">
        <title>Proteomic analysis of the eukaryotic parasite Encephalitozoon cuniculi (microsporidia): a reference map for proteins expressed in late sporogonial stages.</title>
        <authorList>
            <person name="Brosson D."/>
            <person name="Kuhn L."/>
            <person name="Delbac F."/>
            <person name="Garin J."/>
            <person name="Vivares C.P."/>
            <person name="Texier C."/>
        </authorList>
    </citation>
    <scope>IDENTIFICATION BY MASS SPECTROMETRY [LARGE SCALE ANALYSIS]</scope>
    <scope>DEVELOPMENTAL STAGE</scope>
</reference>
<proteinExistence type="evidence at protein level"/>
<protein>
    <recommendedName>
        <fullName evidence="3">Large ribosomal subunit protein uL5</fullName>
    </recommendedName>
    <alternativeName>
        <fullName>60S ribosomal protein L11</fullName>
    </alternativeName>
</protein>
<comment type="function">
    <text evidence="1">Component of the ribosome, a large ribonucleoprotein complex responsible for the synthesis of proteins in the cell. The small ribosomal subunit (SSU) binds messenger RNAs (mRNAs) and translates the encoded message by selecting cognate aminoacyl-transfer RNA (tRNA) molecules. The large subunit (LSU) contains the ribosomal catalytic site termed the peptidyl transferase center (PTC), which catalyzes the formation of peptide bonds, thereby polymerizing the amino acids delivered by tRNAs into a polypeptide chain. The nascent polypeptides leave the ribosome through a tunnel in the LSU and interact with protein factors that function in enzymatic processing, targeting, and the membrane insertion of nascent chains at the exit of the ribosomal tunnel.</text>
</comment>
<comment type="subunit">
    <text evidence="1">Component of the large ribosomal subunit.</text>
</comment>
<comment type="subcellular location">
    <subcellularLocation>
        <location evidence="1">Nucleus</location>
    </subcellularLocation>
    <subcellularLocation>
        <location evidence="1">Cytoplasm</location>
    </subcellularLocation>
</comment>
<comment type="developmental stage">
    <text evidence="2">Expressed in late sporogonial stages.</text>
</comment>
<comment type="similarity">
    <text evidence="3">Belongs to the universal ribosomal protein uL5 family.</text>
</comment>
<sequence>MSSKKINPMREISIKKLSIHICARESGAKLDRAAKVLEQLTGQKPVTSKARMTIRNFGIRRNEKIAVHVNVSGKKAYELLNTALRVKEYELKESCFSNNGCFGFGIEEHIDLGLKYDPNIGIFGMDFFVILARPGDRVSKRKRCKSRVGNKQRVYAEDAKKWFVENFEGVLVE</sequence>